<protein>
    <recommendedName>
        <fullName evidence="1">Translation initiation factor IF-1</fullName>
    </recommendedName>
</protein>
<dbReference type="EMBL" id="AE017244">
    <property type="protein sequence ID" value="AAZ53546.2"/>
    <property type="molecule type" value="Genomic_DNA"/>
</dbReference>
<dbReference type="RefSeq" id="WP_011206047.1">
    <property type="nucleotide sequence ID" value="NC_007332.1"/>
</dbReference>
<dbReference type="SMR" id="Q4A8J3"/>
<dbReference type="GeneID" id="41334471"/>
<dbReference type="KEGG" id="mhp:MHP7448_0172"/>
<dbReference type="HOGENOM" id="CLU_151267_1_0_14"/>
<dbReference type="Proteomes" id="UP000000553">
    <property type="component" value="Chromosome"/>
</dbReference>
<dbReference type="GO" id="GO:0005829">
    <property type="term" value="C:cytosol"/>
    <property type="evidence" value="ECO:0007669"/>
    <property type="project" value="TreeGrafter"/>
</dbReference>
<dbReference type="GO" id="GO:0043022">
    <property type="term" value="F:ribosome binding"/>
    <property type="evidence" value="ECO:0007669"/>
    <property type="project" value="UniProtKB-UniRule"/>
</dbReference>
<dbReference type="GO" id="GO:0019843">
    <property type="term" value="F:rRNA binding"/>
    <property type="evidence" value="ECO:0007669"/>
    <property type="project" value="UniProtKB-UniRule"/>
</dbReference>
<dbReference type="GO" id="GO:0003743">
    <property type="term" value="F:translation initiation factor activity"/>
    <property type="evidence" value="ECO:0007669"/>
    <property type="project" value="UniProtKB-UniRule"/>
</dbReference>
<dbReference type="FunFam" id="2.40.50.140:FF:000002">
    <property type="entry name" value="Translation initiation factor IF-1"/>
    <property type="match status" value="1"/>
</dbReference>
<dbReference type="Gene3D" id="2.40.50.140">
    <property type="entry name" value="Nucleic acid-binding proteins"/>
    <property type="match status" value="1"/>
</dbReference>
<dbReference type="HAMAP" id="MF_00075">
    <property type="entry name" value="IF_1"/>
    <property type="match status" value="1"/>
</dbReference>
<dbReference type="InterPro" id="IPR012340">
    <property type="entry name" value="NA-bd_OB-fold"/>
</dbReference>
<dbReference type="InterPro" id="IPR006196">
    <property type="entry name" value="RNA-binding_domain_S1_IF1"/>
</dbReference>
<dbReference type="InterPro" id="IPR003029">
    <property type="entry name" value="S1_domain"/>
</dbReference>
<dbReference type="InterPro" id="IPR004368">
    <property type="entry name" value="TIF_IF1"/>
</dbReference>
<dbReference type="NCBIfam" id="TIGR00008">
    <property type="entry name" value="infA"/>
    <property type="match status" value="1"/>
</dbReference>
<dbReference type="PANTHER" id="PTHR33370">
    <property type="entry name" value="TRANSLATION INITIATION FACTOR IF-1, CHLOROPLASTIC"/>
    <property type="match status" value="1"/>
</dbReference>
<dbReference type="PANTHER" id="PTHR33370:SF1">
    <property type="entry name" value="TRANSLATION INITIATION FACTOR IF-1, CHLOROPLASTIC"/>
    <property type="match status" value="1"/>
</dbReference>
<dbReference type="Pfam" id="PF01176">
    <property type="entry name" value="eIF-1a"/>
    <property type="match status" value="1"/>
</dbReference>
<dbReference type="SMART" id="SM00316">
    <property type="entry name" value="S1"/>
    <property type="match status" value="1"/>
</dbReference>
<dbReference type="SUPFAM" id="SSF50249">
    <property type="entry name" value="Nucleic acid-binding proteins"/>
    <property type="match status" value="1"/>
</dbReference>
<dbReference type="PROSITE" id="PS50832">
    <property type="entry name" value="S1_IF1_TYPE"/>
    <property type="match status" value="1"/>
</dbReference>
<feature type="chain" id="PRO_0000263823" description="Translation initiation factor IF-1">
    <location>
        <begin position="1"/>
        <end position="75"/>
    </location>
</feature>
<feature type="domain" description="S1-like" evidence="1">
    <location>
        <begin position="1"/>
        <end position="75"/>
    </location>
</feature>
<gene>
    <name evidence="1" type="primary">infA</name>
    <name type="ordered locus">MHP7448_0172</name>
</gene>
<keyword id="KW-0963">Cytoplasm</keyword>
<keyword id="KW-0396">Initiation factor</keyword>
<keyword id="KW-0648">Protein biosynthesis</keyword>
<keyword id="KW-0694">RNA-binding</keyword>
<keyword id="KW-0699">rRNA-binding</keyword>
<evidence type="ECO:0000255" key="1">
    <source>
        <dbReference type="HAMAP-Rule" id="MF_00075"/>
    </source>
</evidence>
<organism>
    <name type="scientific">Mesomycoplasma hyopneumoniae (strain 7448)</name>
    <name type="common">Mycoplasma hyopneumoniae</name>
    <dbReference type="NCBI Taxonomy" id="262722"/>
    <lineage>
        <taxon>Bacteria</taxon>
        <taxon>Bacillati</taxon>
        <taxon>Mycoplasmatota</taxon>
        <taxon>Mycoplasmoidales</taxon>
        <taxon>Metamycoplasmataceae</taxon>
        <taxon>Mesomycoplasma</taxon>
    </lineage>
</organism>
<sequence>MANLPKEQKLLFQGKVTHVFNAQEYEVTLENGIKLNCHIAGKMKIHHIKIIIGDMVKVEISPYDLSKGRIVYRFK</sequence>
<name>IF1_MESH7</name>
<comment type="function">
    <text evidence="1">One of the essential components for the initiation of protein synthesis. Stabilizes the binding of IF-2 and IF-3 on the 30S subunit to which N-formylmethionyl-tRNA(fMet) subsequently binds. Helps modulate mRNA selection, yielding the 30S pre-initiation complex (PIC). Upon addition of the 50S ribosomal subunit IF-1, IF-2 and IF-3 are released leaving the mature 70S translation initiation complex.</text>
</comment>
<comment type="subunit">
    <text evidence="1">Component of the 30S ribosomal translation pre-initiation complex which assembles on the 30S ribosome in the order IF-2 and IF-3, IF-1 and N-formylmethionyl-tRNA(fMet); mRNA recruitment can occur at any time during PIC assembly.</text>
</comment>
<comment type="subcellular location">
    <subcellularLocation>
        <location evidence="1">Cytoplasm</location>
    </subcellularLocation>
</comment>
<comment type="similarity">
    <text evidence="1">Belongs to the IF-1 family.</text>
</comment>
<reference key="1">
    <citation type="journal article" date="2005" name="J. Bacteriol.">
        <title>Swine and poultry pathogens: the complete genome sequences of two strains of Mycoplasma hyopneumoniae and a strain of Mycoplasma synoviae.</title>
        <authorList>
            <person name="Vasconcelos A.T.R."/>
            <person name="Ferreira H.B."/>
            <person name="Bizarro C.V."/>
            <person name="Bonatto S.L."/>
            <person name="Carvalho M.O."/>
            <person name="Pinto P.M."/>
            <person name="Almeida D.F."/>
            <person name="Almeida L.G.P."/>
            <person name="Almeida R."/>
            <person name="Alves-Junior L."/>
            <person name="Assuncao E.N."/>
            <person name="Azevedo V.A.C."/>
            <person name="Bogo M.R."/>
            <person name="Brigido M.M."/>
            <person name="Brocchi M."/>
            <person name="Burity H.A."/>
            <person name="Camargo A.A."/>
            <person name="Camargo S.S."/>
            <person name="Carepo M.S."/>
            <person name="Carraro D.M."/>
            <person name="de Mattos Cascardo J.C."/>
            <person name="Castro L.A."/>
            <person name="Cavalcanti G."/>
            <person name="Chemale G."/>
            <person name="Collevatti R.G."/>
            <person name="Cunha C.W."/>
            <person name="Dallagiovanna B."/>
            <person name="Dambros B.P."/>
            <person name="Dellagostin O.A."/>
            <person name="Falcao C."/>
            <person name="Fantinatti-Garboggini F."/>
            <person name="Felipe M.S.S."/>
            <person name="Fiorentin L."/>
            <person name="Franco G.R."/>
            <person name="Freitas N.S.A."/>
            <person name="Frias D."/>
            <person name="Grangeiro T.B."/>
            <person name="Grisard E.C."/>
            <person name="Guimaraes C.T."/>
            <person name="Hungria M."/>
            <person name="Jardim S.N."/>
            <person name="Krieger M.A."/>
            <person name="Laurino J.P."/>
            <person name="Lima L.F.A."/>
            <person name="Lopes M.I."/>
            <person name="Loreto E.L.S."/>
            <person name="Madeira H.M.F."/>
            <person name="Manfio G.P."/>
            <person name="Maranhao A.Q."/>
            <person name="Martinkovics C.T."/>
            <person name="Medeiros S.R.B."/>
            <person name="Moreira M.A.M."/>
            <person name="Neiva M."/>
            <person name="Ramalho-Neto C.E."/>
            <person name="Nicolas M.F."/>
            <person name="Oliveira S.C."/>
            <person name="Paixao R.F.C."/>
            <person name="Pedrosa F.O."/>
            <person name="Pena S.D.J."/>
            <person name="Pereira M."/>
            <person name="Pereira-Ferrari L."/>
            <person name="Piffer I."/>
            <person name="Pinto L.S."/>
            <person name="Potrich D.P."/>
            <person name="Salim A.C.M."/>
            <person name="Santos F.R."/>
            <person name="Schmitt R."/>
            <person name="Schneider M.P.C."/>
            <person name="Schrank A."/>
            <person name="Schrank I.S."/>
            <person name="Schuck A.F."/>
            <person name="Seuanez H.N."/>
            <person name="Silva D.W."/>
            <person name="Silva R."/>
            <person name="Silva S.C."/>
            <person name="Soares C.M.A."/>
            <person name="Souza K.R.L."/>
            <person name="Souza R.C."/>
            <person name="Staats C.C."/>
            <person name="Steffens M.B.R."/>
            <person name="Teixeira S.M.R."/>
            <person name="Urmenyi T.P."/>
            <person name="Vainstein M.H."/>
            <person name="Zuccherato L.W."/>
            <person name="Simpson A.J.G."/>
            <person name="Zaha A."/>
        </authorList>
    </citation>
    <scope>NUCLEOTIDE SEQUENCE [LARGE SCALE GENOMIC DNA]</scope>
    <source>
        <strain>7448</strain>
    </source>
</reference>
<proteinExistence type="inferred from homology"/>
<accession>Q4A8J3</accession>